<organism>
    <name type="scientific">Escherichia coli O157:H7 (strain EC4115 / EHEC)</name>
    <dbReference type="NCBI Taxonomy" id="444450"/>
    <lineage>
        <taxon>Bacteria</taxon>
        <taxon>Pseudomonadati</taxon>
        <taxon>Pseudomonadota</taxon>
        <taxon>Gammaproteobacteria</taxon>
        <taxon>Enterobacterales</taxon>
        <taxon>Enterobacteriaceae</taxon>
        <taxon>Escherichia</taxon>
    </lineage>
</organism>
<gene>
    <name evidence="1" type="primary">selA</name>
    <name type="ordered locus">ECH74115_4962</name>
</gene>
<comment type="function">
    <text evidence="1">Converts seryl-tRNA(Sec) to selenocysteinyl-tRNA(Sec) required for selenoprotein biosynthesis.</text>
</comment>
<comment type="catalytic activity">
    <reaction evidence="1">
        <text>L-seryl-tRNA(Sec) + selenophosphate + H(+) = L-selenocysteinyl-tRNA(Sec) + phosphate</text>
        <dbReference type="Rhea" id="RHEA:22728"/>
        <dbReference type="Rhea" id="RHEA-COMP:9742"/>
        <dbReference type="Rhea" id="RHEA-COMP:9743"/>
        <dbReference type="ChEBI" id="CHEBI:15378"/>
        <dbReference type="ChEBI" id="CHEBI:16144"/>
        <dbReference type="ChEBI" id="CHEBI:43474"/>
        <dbReference type="ChEBI" id="CHEBI:78533"/>
        <dbReference type="ChEBI" id="CHEBI:78573"/>
        <dbReference type="EC" id="2.9.1.1"/>
    </reaction>
</comment>
<comment type="cofactor">
    <cofactor evidence="1">
        <name>pyridoxal 5'-phosphate</name>
        <dbReference type="ChEBI" id="CHEBI:597326"/>
    </cofactor>
</comment>
<comment type="pathway">
    <text evidence="1">Aminoacyl-tRNA biosynthesis; selenocysteinyl-tRNA(Sec) biosynthesis; selenocysteinyl-tRNA(Sec) from L-seryl-tRNA(Sec) (bacterial route): step 1/1.</text>
</comment>
<comment type="subunit">
    <text evidence="1">Homodecamer; pentamer of dimers. Binds only one seryl-tRNA(Sec) per dimer.</text>
</comment>
<comment type="subcellular location">
    <subcellularLocation>
        <location evidence="1">Cytoplasm</location>
    </subcellularLocation>
</comment>
<comment type="similarity">
    <text evidence="1">Belongs to the SelA family.</text>
</comment>
<accession>B5YW91</accession>
<dbReference type="EC" id="2.9.1.1" evidence="1"/>
<dbReference type="EMBL" id="CP001164">
    <property type="protein sequence ID" value="ACI36031.1"/>
    <property type="molecule type" value="Genomic_DNA"/>
</dbReference>
<dbReference type="RefSeq" id="WP_000206275.1">
    <property type="nucleotide sequence ID" value="NC_011353.1"/>
</dbReference>
<dbReference type="SMR" id="B5YW91"/>
<dbReference type="GeneID" id="75204641"/>
<dbReference type="KEGG" id="ecf:ECH74115_4962"/>
<dbReference type="HOGENOM" id="CLU_038142_1_0_6"/>
<dbReference type="UniPathway" id="UPA00906">
    <property type="reaction ID" value="UER00896"/>
</dbReference>
<dbReference type="GO" id="GO:0005737">
    <property type="term" value="C:cytoplasm"/>
    <property type="evidence" value="ECO:0007669"/>
    <property type="project" value="UniProtKB-SubCell"/>
</dbReference>
<dbReference type="GO" id="GO:0004125">
    <property type="term" value="F:L-seryl-tRNA(Sec) selenium transferase activity"/>
    <property type="evidence" value="ECO:0007669"/>
    <property type="project" value="UniProtKB-UniRule"/>
</dbReference>
<dbReference type="GO" id="GO:0001717">
    <property type="term" value="P:conversion of seryl-tRNAsec to selenocys-tRNAsec"/>
    <property type="evidence" value="ECO:0007669"/>
    <property type="project" value="UniProtKB-UniRule"/>
</dbReference>
<dbReference type="GO" id="GO:0001514">
    <property type="term" value="P:selenocysteine incorporation"/>
    <property type="evidence" value="ECO:0007669"/>
    <property type="project" value="UniProtKB-UniRule"/>
</dbReference>
<dbReference type="FunFam" id="3.40.640.10:FF:000028">
    <property type="entry name" value="L-seryl-tRNA(Sec) selenium transferase"/>
    <property type="match status" value="1"/>
</dbReference>
<dbReference type="FunFam" id="3.90.1150.180:FF:000001">
    <property type="entry name" value="L-seryl-tRNA(Sec) selenium transferase"/>
    <property type="match status" value="1"/>
</dbReference>
<dbReference type="Gene3D" id="3.90.1150.180">
    <property type="match status" value="1"/>
</dbReference>
<dbReference type="Gene3D" id="3.40.640.10">
    <property type="entry name" value="Type I PLP-dependent aspartate aminotransferase-like (Major domain)"/>
    <property type="match status" value="1"/>
</dbReference>
<dbReference type="HAMAP" id="MF_00423">
    <property type="entry name" value="SelA"/>
    <property type="match status" value="1"/>
</dbReference>
<dbReference type="InterPro" id="IPR015424">
    <property type="entry name" value="PyrdxlP-dep_Trfase"/>
</dbReference>
<dbReference type="InterPro" id="IPR015421">
    <property type="entry name" value="PyrdxlP-dep_Trfase_major"/>
</dbReference>
<dbReference type="InterPro" id="IPR018319">
    <property type="entry name" value="SelA-like"/>
</dbReference>
<dbReference type="InterPro" id="IPR004534">
    <property type="entry name" value="SelA_trans"/>
</dbReference>
<dbReference type="InterPro" id="IPR025862">
    <property type="entry name" value="SelA_trans_N_dom"/>
</dbReference>
<dbReference type="NCBIfam" id="TIGR00474">
    <property type="entry name" value="selA"/>
    <property type="match status" value="1"/>
</dbReference>
<dbReference type="PANTHER" id="PTHR32328">
    <property type="entry name" value="L-SERYL-TRNA(SEC) SELENIUM TRANSFERASE"/>
    <property type="match status" value="1"/>
</dbReference>
<dbReference type="PANTHER" id="PTHR32328:SF0">
    <property type="entry name" value="L-SERYL-TRNA(SEC) SELENIUM TRANSFERASE"/>
    <property type="match status" value="1"/>
</dbReference>
<dbReference type="Pfam" id="PF12390">
    <property type="entry name" value="Se-cys_synth_N"/>
    <property type="match status" value="1"/>
</dbReference>
<dbReference type="Pfam" id="PF03841">
    <property type="entry name" value="SelA"/>
    <property type="match status" value="1"/>
</dbReference>
<dbReference type="SUPFAM" id="SSF53383">
    <property type="entry name" value="PLP-dependent transferases"/>
    <property type="match status" value="1"/>
</dbReference>
<sequence>MTTETRSLYSQLPAIDRLLRDSSFLSLRDTYGHTRVVELLRQMLDEAREVIRGSQTLPAWCENWAQEVDARLTKEAQSALRPVINLTGTVLHTNLGRALQAEAAVEAVAQAMRSPVTLEYDLDDAGRGHRDRALAQLLCRITGAEDACIVNNNAAAVLLMLAATASGKEVVVSRGELVEIGGAFRIPDVMRQAGCTLHEVGTTNRTHANDYRQAVNENTALLMKVHTSNYSIQGFTKAIDEAELVALGKELDVPVVTDLGSGSLVDLSQYGLPKEPMPQELIAAGVSLVSFSGDKLLGGPQAGIIVGKKEMIARLQSHPLKRALRADKMTLAALEATLRLYLHPEALSEKLPTLRLLTRSAEVIQIQAQRLQAPLAAHYGAEFAVQVMPCLSQIGSGSLPVDRLPSAALTFTPHDGRGSHLESLAARWRELPVPVIGRIYDGRLWLDLRCLEDEQRFLEMLLK</sequence>
<name>SELA_ECO5E</name>
<keyword id="KW-0963">Cytoplasm</keyword>
<keyword id="KW-0648">Protein biosynthesis</keyword>
<keyword id="KW-0663">Pyridoxal phosphate</keyword>
<keyword id="KW-0711">Selenium</keyword>
<keyword id="KW-0808">Transferase</keyword>
<protein>
    <recommendedName>
        <fullName evidence="1">L-seryl-tRNA(Sec) selenium transferase</fullName>
        <ecNumber evidence="1">2.9.1.1</ecNumber>
    </recommendedName>
    <alternativeName>
        <fullName evidence="1">Selenocysteine synthase</fullName>
        <shortName evidence="1">Sec synthase</shortName>
    </alternativeName>
    <alternativeName>
        <fullName evidence="1">Selenocysteinyl-tRNA(Sec) synthase</fullName>
    </alternativeName>
</protein>
<feature type="chain" id="PRO_1000124138" description="L-seryl-tRNA(Sec) selenium transferase">
    <location>
        <begin position="1"/>
        <end position="463"/>
    </location>
</feature>
<feature type="modified residue" description="N6-(pyridoxal phosphate)lysine" evidence="1">
    <location>
        <position position="295"/>
    </location>
</feature>
<reference key="1">
    <citation type="journal article" date="2011" name="Proc. Natl. Acad. Sci. U.S.A.">
        <title>Genomic anatomy of Escherichia coli O157:H7 outbreaks.</title>
        <authorList>
            <person name="Eppinger M."/>
            <person name="Mammel M.K."/>
            <person name="Leclerc J.E."/>
            <person name="Ravel J."/>
            <person name="Cebula T.A."/>
        </authorList>
    </citation>
    <scope>NUCLEOTIDE SEQUENCE [LARGE SCALE GENOMIC DNA]</scope>
    <source>
        <strain>EC4115 / EHEC</strain>
    </source>
</reference>
<proteinExistence type="inferred from homology"/>
<evidence type="ECO:0000255" key="1">
    <source>
        <dbReference type="HAMAP-Rule" id="MF_00423"/>
    </source>
</evidence>